<evidence type="ECO:0000250" key="1"/>
<evidence type="ECO:0000250" key="2">
    <source>
        <dbReference type="UniProtKB" id="Q8BIF2"/>
    </source>
</evidence>
<evidence type="ECO:0000255" key="3">
    <source>
        <dbReference type="PROSITE-ProRule" id="PRU00176"/>
    </source>
</evidence>
<evidence type="ECO:0000256" key="4">
    <source>
        <dbReference type="SAM" id="MobiDB-lite"/>
    </source>
</evidence>
<protein>
    <recommendedName>
        <fullName>RNA binding protein fox-1 homolog 3</fullName>
    </recommendedName>
    <alternativeName>
        <fullName>Fox-1 homolog C</fullName>
    </alternativeName>
</protein>
<sequence length="328" mass="35468">MAQPYPPAQYPPPPQNGIPAEYAPPPPHPTPDYSGQTPVPPEHGMTLYTPAQTHPEQPSSDTSTQPITGAQTVPQTDEAAQTDSQPLHPSDPTEKQQPKRLHVSNIPFRFRDPDLRQMFGQFGKILDVEIIFNERGSKVNNATARVMTNKKTANPYTNGWKLNPVVGAVYGPEFYAVTGFPYPTTGTAVAYRGAHLRGRGRAVYNTFRAAPPPPPIPTYGAALEQTLVKMPVPWAGLAPCPLPPQQTPEPAYPTSPAFPPLSCPFASRVVYQDGFYGAEIYGGYAAYRYAQPAAAAAAYSDSYGRVYAAADPYHHTIGPAATYSIGTM</sequence>
<keyword id="KW-0963">Cytoplasm</keyword>
<keyword id="KW-0488">Methylation</keyword>
<keyword id="KW-0507">mRNA processing</keyword>
<keyword id="KW-0508">mRNA splicing</keyword>
<keyword id="KW-0539">Nucleus</keyword>
<keyword id="KW-1185">Reference proteome</keyword>
<keyword id="KW-0694">RNA-binding</keyword>
<reference key="1">
    <citation type="submission" date="2006-08" db="EMBL/GenBank/DDBJ databases">
        <authorList>
            <consortium name="NIH - Mammalian Gene Collection (MGC) project"/>
        </authorList>
    </citation>
    <scope>NUCLEOTIDE SEQUENCE [LARGE SCALE MRNA]</scope>
    <source>
        <strain>Hereford</strain>
        <tissue>Thalamus</tissue>
    </source>
</reference>
<name>RFOX3_BOVIN</name>
<feature type="chain" id="PRO_0000349206" description="RNA binding protein fox-1 homolog 3">
    <location>
        <begin position="1"/>
        <end position="328"/>
    </location>
</feature>
<feature type="domain" description="RRM" evidence="3">
    <location>
        <begin position="99"/>
        <end position="172"/>
    </location>
</feature>
<feature type="region of interest" description="Disordered" evidence="4">
    <location>
        <begin position="1"/>
        <end position="106"/>
    </location>
</feature>
<feature type="compositionally biased region" description="Pro residues" evidence="4">
    <location>
        <begin position="1"/>
        <end position="30"/>
    </location>
</feature>
<feature type="compositionally biased region" description="Polar residues" evidence="4">
    <location>
        <begin position="49"/>
        <end position="87"/>
    </location>
</feature>
<feature type="site" description="Interaction with RNA" evidence="1">
    <location>
        <position position="100"/>
    </location>
</feature>
<feature type="site" description="Interaction with RNA" evidence="1">
    <location>
        <position position="108"/>
    </location>
</feature>
<feature type="site" description="Interaction with RNA" evidence="1">
    <location>
        <position position="109"/>
    </location>
</feature>
<feature type="site" description="Interaction with RNA" evidence="1">
    <location>
        <position position="133"/>
    </location>
</feature>
<feature type="site" description="Interaction with RNA" evidence="1">
    <location>
        <position position="138"/>
    </location>
</feature>
<feature type="site" description="Interaction with RNA" evidence="1">
    <location>
        <position position="145"/>
    </location>
</feature>
<feature type="modified residue" description="Asymmetric dimethylarginine; alternate" evidence="2">
    <location>
        <position position="192"/>
    </location>
</feature>
<feature type="modified residue" description="Omega-N-methylarginine; alternate" evidence="2">
    <location>
        <position position="192"/>
    </location>
</feature>
<feature type="modified residue" description="Asymmetric dimethylarginine" evidence="2">
    <location>
        <position position="288"/>
    </location>
</feature>
<proteinExistence type="evidence at transcript level"/>
<dbReference type="EMBL" id="BC119875">
    <property type="protein sequence ID" value="AAI19876.1"/>
    <property type="molecule type" value="mRNA"/>
</dbReference>
<dbReference type="RefSeq" id="NP_001069005.1">
    <property type="nucleotide sequence ID" value="NM_001075537.1"/>
</dbReference>
<dbReference type="RefSeq" id="XP_005221252.1">
    <property type="nucleotide sequence ID" value="XM_005221195.3"/>
</dbReference>
<dbReference type="SMR" id="Q0VD23"/>
<dbReference type="FunCoup" id="Q0VD23">
    <property type="interactions" value="747"/>
</dbReference>
<dbReference type="STRING" id="9913.ENSBTAP00000008240"/>
<dbReference type="Ensembl" id="ENSBTAT00000008241.5">
    <property type="protein sequence ID" value="ENSBTAP00000008241.3"/>
    <property type="gene ID" value="ENSBTAG00000006280.7"/>
</dbReference>
<dbReference type="GeneID" id="511773"/>
<dbReference type="KEGG" id="bta:511773"/>
<dbReference type="CTD" id="146713"/>
<dbReference type="VEuPathDB" id="HostDB:ENSBTAG00000006280"/>
<dbReference type="VGNC" id="VGNC:33779">
    <property type="gene designation" value="RBFOX3"/>
</dbReference>
<dbReference type="GeneTree" id="ENSGT00940000159924"/>
<dbReference type="HOGENOM" id="CLU_048440_0_0_1"/>
<dbReference type="InParanoid" id="Q0VD23"/>
<dbReference type="OMA" id="AAEPYHH"/>
<dbReference type="Proteomes" id="UP000009136">
    <property type="component" value="Chromosome 19"/>
</dbReference>
<dbReference type="Bgee" id="ENSBTAG00000006280">
    <property type="expression patterns" value="Expressed in prefrontal cortex and 74 other cell types or tissues"/>
</dbReference>
<dbReference type="GO" id="GO:0005737">
    <property type="term" value="C:cytoplasm"/>
    <property type="evidence" value="ECO:0000318"/>
    <property type="project" value="GO_Central"/>
</dbReference>
<dbReference type="GO" id="GO:0005634">
    <property type="term" value="C:nucleus"/>
    <property type="evidence" value="ECO:0000318"/>
    <property type="project" value="GO_Central"/>
</dbReference>
<dbReference type="GO" id="GO:0003729">
    <property type="term" value="F:mRNA binding"/>
    <property type="evidence" value="ECO:0000318"/>
    <property type="project" value="GO_Central"/>
</dbReference>
<dbReference type="GO" id="GO:0006397">
    <property type="term" value="P:mRNA processing"/>
    <property type="evidence" value="ECO:0007669"/>
    <property type="project" value="UniProtKB-KW"/>
</dbReference>
<dbReference type="GO" id="GO:0007399">
    <property type="term" value="P:nervous system development"/>
    <property type="evidence" value="ECO:0000318"/>
    <property type="project" value="GO_Central"/>
</dbReference>
<dbReference type="GO" id="GO:0000381">
    <property type="term" value="P:regulation of alternative mRNA splicing, via spliceosome"/>
    <property type="evidence" value="ECO:0000318"/>
    <property type="project" value="GO_Central"/>
</dbReference>
<dbReference type="GO" id="GO:0008380">
    <property type="term" value="P:RNA splicing"/>
    <property type="evidence" value="ECO:0007669"/>
    <property type="project" value="UniProtKB-KW"/>
</dbReference>
<dbReference type="FunFam" id="3.30.70.330:FF:000473">
    <property type="entry name" value="RNA binding fox-1 homolog 3"/>
    <property type="match status" value="1"/>
</dbReference>
<dbReference type="Gene3D" id="3.30.70.330">
    <property type="match status" value="1"/>
</dbReference>
<dbReference type="InterPro" id="IPR025670">
    <property type="entry name" value="Fox-1_C_dom"/>
</dbReference>
<dbReference type="InterPro" id="IPR012677">
    <property type="entry name" value="Nucleotide-bd_a/b_plait_sf"/>
</dbReference>
<dbReference type="InterPro" id="IPR035979">
    <property type="entry name" value="RBD_domain_sf"/>
</dbReference>
<dbReference type="InterPro" id="IPR017325">
    <property type="entry name" value="RBFOX1-3"/>
</dbReference>
<dbReference type="InterPro" id="IPR047131">
    <property type="entry name" value="RBFOX1-like"/>
</dbReference>
<dbReference type="InterPro" id="IPR000504">
    <property type="entry name" value="RRM_dom"/>
</dbReference>
<dbReference type="PANTHER" id="PTHR15597">
    <property type="entry name" value="ATAXIN 2-BINDING PROTEIN 1-RELATED"/>
    <property type="match status" value="1"/>
</dbReference>
<dbReference type="PANTHER" id="PTHR15597:SF25">
    <property type="entry name" value="RNA BINDING PROTEIN FOX-1 HOMOLOG 3"/>
    <property type="match status" value="1"/>
</dbReference>
<dbReference type="Pfam" id="PF12414">
    <property type="entry name" value="Fox-1_C"/>
    <property type="match status" value="1"/>
</dbReference>
<dbReference type="Pfam" id="PF00076">
    <property type="entry name" value="RRM_1"/>
    <property type="match status" value="1"/>
</dbReference>
<dbReference type="PIRSF" id="PIRSF037932">
    <property type="entry name" value="Ataxin_2_bd_A2BP"/>
    <property type="match status" value="1"/>
</dbReference>
<dbReference type="SUPFAM" id="SSF54928">
    <property type="entry name" value="RNA-binding domain, RBD"/>
    <property type="match status" value="1"/>
</dbReference>
<dbReference type="PROSITE" id="PS50102">
    <property type="entry name" value="RRM"/>
    <property type="match status" value="1"/>
</dbReference>
<organism>
    <name type="scientific">Bos taurus</name>
    <name type="common">Bovine</name>
    <dbReference type="NCBI Taxonomy" id="9913"/>
    <lineage>
        <taxon>Eukaryota</taxon>
        <taxon>Metazoa</taxon>
        <taxon>Chordata</taxon>
        <taxon>Craniata</taxon>
        <taxon>Vertebrata</taxon>
        <taxon>Euteleostomi</taxon>
        <taxon>Mammalia</taxon>
        <taxon>Eutheria</taxon>
        <taxon>Laurasiatheria</taxon>
        <taxon>Artiodactyla</taxon>
        <taxon>Ruminantia</taxon>
        <taxon>Pecora</taxon>
        <taxon>Bovidae</taxon>
        <taxon>Bovinae</taxon>
        <taxon>Bos</taxon>
    </lineage>
</organism>
<accession>Q0VD23</accession>
<comment type="function">
    <text evidence="2">Pre-mRNA alternative splicing regulator. Regulates alternative splicing of RBFOX2 to enhance the production of mRNA species that are targeted for nonsense-mediated decay (NMD).</text>
</comment>
<comment type="subcellular location">
    <subcellularLocation>
        <location evidence="1">Nucleus</location>
    </subcellularLocation>
    <subcellularLocation>
        <location evidence="1">Cytoplasm</location>
    </subcellularLocation>
</comment>
<gene>
    <name type="primary">RBFOX3</name>
</gene>